<comment type="catalytic activity">
    <reaction evidence="1">
        <text>urea + 2 H2O + H(+) = hydrogencarbonate + 2 NH4(+)</text>
        <dbReference type="Rhea" id="RHEA:20557"/>
        <dbReference type="ChEBI" id="CHEBI:15377"/>
        <dbReference type="ChEBI" id="CHEBI:15378"/>
        <dbReference type="ChEBI" id="CHEBI:16199"/>
        <dbReference type="ChEBI" id="CHEBI:17544"/>
        <dbReference type="ChEBI" id="CHEBI:28938"/>
        <dbReference type="EC" id="3.5.1.5"/>
    </reaction>
</comment>
<comment type="cofactor">
    <cofactor evidence="1">
        <name>Ni cation</name>
        <dbReference type="ChEBI" id="CHEBI:25516"/>
    </cofactor>
    <text evidence="1">Binds 2 nickel ions per subunit.</text>
</comment>
<comment type="pathway">
    <text evidence="1">Nitrogen metabolism; urea degradation; CO(2) and NH(3) from urea (urease route): step 1/1.</text>
</comment>
<comment type="subunit">
    <text evidence="1">Heterotrimer of UreA (gamma), UreB (beta) and UreC (alpha) subunits. Three heterotrimers associate to form the active enzyme.</text>
</comment>
<comment type="subcellular location">
    <subcellularLocation>
        <location evidence="1">Cytoplasm</location>
    </subcellularLocation>
</comment>
<comment type="PTM">
    <text evidence="1">Carboxylation allows a single lysine to coordinate two nickel ions.</text>
</comment>
<comment type="similarity">
    <text evidence="1">Belongs to the metallo-dependent hydrolases superfamily. Urease alpha subunit family.</text>
</comment>
<organism>
    <name type="scientific">Haemophilus influenzae (strain 86-028NP)</name>
    <dbReference type="NCBI Taxonomy" id="281310"/>
    <lineage>
        <taxon>Bacteria</taxon>
        <taxon>Pseudomonadati</taxon>
        <taxon>Pseudomonadota</taxon>
        <taxon>Gammaproteobacteria</taxon>
        <taxon>Pasteurellales</taxon>
        <taxon>Pasteurellaceae</taxon>
        <taxon>Haemophilus</taxon>
    </lineage>
</organism>
<keyword id="KW-0963">Cytoplasm</keyword>
<keyword id="KW-0378">Hydrolase</keyword>
<keyword id="KW-0479">Metal-binding</keyword>
<keyword id="KW-0533">Nickel</keyword>
<dbReference type="EC" id="3.5.1.5" evidence="1"/>
<dbReference type="EMBL" id="CP000057">
    <property type="protein sequence ID" value="AAX87588.1"/>
    <property type="molecule type" value="Genomic_DNA"/>
</dbReference>
<dbReference type="RefSeq" id="WP_005688620.1">
    <property type="nucleotide sequence ID" value="NC_007146.2"/>
</dbReference>
<dbReference type="SMR" id="Q4QN09"/>
<dbReference type="MEROPS" id="M38.982"/>
<dbReference type="GeneID" id="93219548"/>
<dbReference type="KEGG" id="hit:NTHI0665"/>
<dbReference type="HOGENOM" id="CLU_000980_0_0_6"/>
<dbReference type="UniPathway" id="UPA00258">
    <property type="reaction ID" value="UER00370"/>
</dbReference>
<dbReference type="Proteomes" id="UP000002525">
    <property type="component" value="Chromosome"/>
</dbReference>
<dbReference type="GO" id="GO:0005737">
    <property type="term" value="C:cytoplasm"/>
    <property type="evidence" value="ECO:0007669"/>
    <property type="project" value="UniProtKB-SubCell"/>
</dbReference>
<dbReference type="GO" id="GO:0016151">
    <property type="term" value="F:nickel cation binding"/>
    <property type="evidence" value="ECO:0007669"/>
    <property type="project" value="UniProtKB-UniRule"/>
</dbReference>
<dbReference type="GO" id="GO:0009039">
    <property type="term" value="F:urease activity"/>
    <property type="evidence" value="ECO:0007669"/>
    <property type="project" value="UniProtKB-UniRule"/>
</dbReference>
<dbReference type="GO" id="GO:0043419">
    <property type="term" value="P:urea catabolic process"/>
    <property type="evidence" value="ECO:0007669"/>
    <property type="project" value="UniProtKB-UniRule"/>
</dbReference>
<dbReference type="CDD" id="cd00375">
    <property type="entry name" value="Urease_alpha"/>
    <property type="match status" value="1"/>
</dbReference>
<dbReference type="Gene3D" id="3.20.20.140">
    <property type="entry name" value="Metal-dependent hydrolases"/>
    <property type="match status" value="1"/>
</dbReference>
<dbReference type="Gene3D" id="2.30.40.10">
    <property type="entry name" value="Urease, subunit C, domain 1"/>
    <property type="match status" value="1"/>
</dbReference>
<dbReference type="HAMAP" id="MF_01953">
    <property type="entry name" value="Urease_alpha"/>
    <property type="match status" value="1"/>
</dbReference>
<dbReference type="InterPro" id="IPR006680">
    <property type="entry name" value="Amidohydro-rel"/>
</dbReference>
<dbReference type="InterPro" id="IPR011059">
    <property type="entry name" value="Metal-dep_hydrolase_composite"/>
</dbReference>
<dbReference type="InterPro" id="IPR032466">
    <property type="entry name" value="Metal_Hydrolase"/>
</dbReference>
<dbReference type="InterPro" id="IPR011612">
    <property type="entry name" value="Urease_alpha_N_dom"/>
</dbReference>
<dbReference type="InterPro" id="IPR050112">
    <property type="entry name" value="Urease_alpha_subunit"/>
</dbReference>
<dbReference type="InterPro" id="IPR017950">
    <property type="entry name" value="Urease_AS"/>
</dbReference>
<dbReference type="InterPro" id="IPR005848">
    <property type="entry name" value="Urease_asu"/>
</dbReference>
<dbReference type="InterPro" id="IPR017951">
    <property type="entry name" value="Urease_asu_c"/>
</dbReference>
<dbReference type="InterPro" id="IPR029754">
    <property type="entry name" value="Urease_Ni-bd"/>
</dbReference>
<dbReference type="NCBIfam" id="NF009686">
    <property type="entry name" value="PRK13207.1"/>
    <property type="match status" value="1"/>
</dbReference>
<dbReference type="NCBIfam" id="TIGR01792">
    <property type="entry name" value="urease_alph"/>
    <property type="match status" value="1"/>
</dbReference>
<dbReference type="PANTHER" id="PTHR43440">
    <property type="entry name" value="UREASE"/>
    <property type="match status" value="1"/>
</dbReference>
<dbReference type="PANTHER" id="PTHR43440:SF1">
    <property type="entry name" value="UREASE"/>
    <property type="match status" value="1"/>
</dbReference>
<dbReference type="Pfam" id="PF01979">
    <property type="entry name" value="Amidohydro_1"/>
    <property type="match status" value="1"/>
</dbReference>
<dbReference type="Pfam" id="PF00449">
    <property type="entry name" value="Urease_alpha"/>
    <property type="match status" value="1"/>
</dbReference>
<dbReference type="PRINTS" id="PR01752">
    <property type="entry name" value="UREASE"/>
</dbReference>
<dbReference type="SUPFAM" id="SSF51338">
    <property type="entry name" value="Composite domain of metallo-dependent hydrolases"/>
    <property type="match status" value="2"/>
</dbReference>
<dbReference type="SUPFAM" id="SSF51556">
    <property type="entry name" value="Metallo-dependent hydrolases"/>
    <property type="match status" value="1"/>
</dbReference>
<dbReference type="PROSITE" id="PS01120">
    <property type="entry name" value="UREASE_1"/>
    <property type="match status" value="1"/>
</dbReference>
<dbReference type="PROSITE" id="PS00145">
    <property type="entry name" value="UREASE_2"/>
    <property type="match status" value="1"/>
</dbReference>
<dbReference type="PROSITE" id="PS51368">
    <property type="entry name" value="UREASE_3"/>
    <property type="match status" value="1"/>
</dbReference>
<accession>Q4QN09</accession>
<reference key="1">
    <citation type="journal article" date="2005" name="J. Bacteriol.">
        <title>Genomic sequence of an otitis media isolate of nontypeable Haemophilus influenzae: comparative study with H. influenzae serotype d, strain KW20.</title>
        <authorList>
            <person name="Harrison A."/>
            <person name="Dyer D.W."/>
            <person name="Gillaspy A."/>
            <person name="Ray W.C."/>
            <person name="Mungur R."/>
            <person name="Carson M.B."/>
            <person name="Zhong H."/>
            <person name="Gipson J."/>
            <person name="Gipson M."/>
            <person name="Johnson L.S."/>
            <person name="Lewis L."/>
            <person name="Bakaletz L.O."/>
            <person name="Munson R.S. Jr."/>
        </authorList>
    </citation>
    <scope>NUCLEOTIDE SEQUENCE [LARGE SCALE GENOMIC DNA]</scope>
    <source>
        <strain>86-028NP</strain>
    </source>
</reference>
<sequence>MALTISRAQYVATYGPTVGDKVRLGDTNLWATIEQDLLTKGDECKFGGGKSVRDGMAQSGTATRDNPNVLDFVITNVMIIDAKLGIIKADIGIRDGRIVGIGQAGNPDTMDNVTPNMIIGASTEVHNGAHLIATAGGIDTHIHFICPQQAQHAIESGVTTLIGGGTGPADGTHATTCTPGAWYMERMFQAAEALPVNVGFFGKGNCSTLDPLREQIEAGALGLKIHEDWGATPAVIDSALKVADEMDIQVAIHTDTLNESGFLEDTMKAIDGRVIHTFHTEGAGGGHAPDIIKAAMYSNVLPASTNPTRPFTKNTIDEHLDMLMVCHHLDKRVPEDVAFADSRIRPETIAAEDILHDMGVFSIMSSDSQAMGRIGEVVIRTWQTADKMKMQRGELGNEGNDNFRIKRYIAKYTINPAIAHGIAEHIGSLEVGKIADIVLWKPMFFGVKPEVVIKKGFISYAKMGDPNASIPTPQPVFYRPMYGAQGLATAQTAVFFVSQAAEKADIREKFGLHKETIAVKGCRNVGKKDLVHNDVTPNITVDAERYEVRVDGELITCEPVDSVPLGQRYFLF</sequence>
<evidence type="ECO:0000255" key="1">
    <source>
        <dbReference type="HAMAP-Rule" id="MF_01953"/>
    </source>
</evidence>
<proteinExistence type="inferred from homology"/>
<feature type="chain" id="PRO_0000234157" description="Urease subunit alpha">
    <location>
        <begin position="1"/>
        <end position="572"/>
    </location>
</feature>
<feature type="domain" description="Urease" evidence="1">
    <location>
        <begin position="136"/>
        <end position="572"/>
    </location>
</feature>
<feature type="active site" description="Proton donor" evidence="1">
    <location>
        <position position="327"/>
    </location>
</feature>
<feature type="binding site" evidence="1">
    <location>
        <position position="141"/>
    </location>
    <ligand>
        <name>Ni(2+)</name>
        <dbReference type="ChEBI" id="CHEBI:49786"/>
        <label>1</label>
    </ligand>
</feature>
<feature type="binding site" evidence="1">
    <location>
        <position position="143"/>
    </location>
    <ligand>
        <name>Ni(2+)</name>
        <dbReference type="ChEBI" id="CHEBI:49786"/>
        <label>1</label>
    </ligand>
</feature>
<feature type="binding site" description="via carbamate group" evidence="1">
    <location>
        <position position="224"/>
    </location>
    <ligand>
        <name>Ni(2+)</name>
        <dbReference type="ChEBI" id="CHEBI:49786"/>
        <label>1</label>
    </ligand>
</feature>
<feature type="binding site" description="via carbamate group" evidence="1">
    <location>
        <position position="224"/>
    </location>
    <ligand>
        <name>Ni(2+)</name>
        <dbReference type="ChEBI" id="CHEBI:49786"/>
        <label>2</label>
    </ligand>
</feature>
<feature type="binding site" evidence="1">
    <location>
        <position position="226"/>
    </location>
    <ligand>
        <name>substrate</name>
    </ligand>
</feature>
<feature type="binding site" evidence="1">
    <location>
        <position position="253"/>
    </location>
    <ligand>
        <name>Ni(2+)</name>
        <dbReference type="ChEBI" id="CHEBI:49786"/>
        <label>2</label>
    </ligand>
</feature>
<feature type="binding site" evidence="1">
    <location>
        <position position="279"/>
    </location>
    <ligand>
        <name>Ni(2+)</name>
        <dbReference type="ChEBI" id="CHEBI:49786"/>
        <label>2</label>
    </ligand>
</feature>
<feature type="binding site" evidence="1">
    <location>
        <position position="367"/>
    </location>
    <ligand>
        <name>Ni(2+)</name>
        <dbReference type="ChEBI" id="CHEBI:49786"/>
        <label>1</label>
    </ligand>
</feature>
<feature type="modified residue" description="N6-carboxylysine" evidence="1">
    <location>
        <position position="224"/>
    </location>
</feature>
<gene>
    <name evidence="1" type="primary">ureC</name>
    <name type="ordered locus">NTHI0665</name>
</gene>
<protein>
    <recommendedName>
        <fullName evidence="1">Urease subunit alpha</fullName>
        <ecNumber evidence="1">3.5.1.5</ecNumber>
    </recommendedName>
    <alternativeName>
        <fullName evidence="1">Urea amidohydrolase subunit alpha</fullName>
    </alternativeName>
</protein>
<name>URE1_HAEI8</name>